<gene>
    <name evidence="1" type="primary">garL</name>
    <name type="ordered locus">ECIAI39_3625</name>
</gene>
<name>GARL_ECO7I</name>
<sequence length="256" mass="27399">MNNDVFPNKFKAALAAKQVQIGCWSALSNPISTEVLGLAGFDWLVLDGEHAPNDISTFIPQLMALKGSASAPVVRVPTNEPVIIKRLLDIGFYNFLIPFVETKEEAEQAVASTRYPPEGIRGVSVSHRANMFGTVADYFAQSNKNITILVQIESQQGVDNVDAIAATEGVDGIFVGPSDLAAALGHLGNASHPDVQKAIQHIFNRASAHGKPSGILAPVEADARRYLEWGATFVAVGSDLGVFRSATQKLADTFKK</sequence>
<keyword id="KW-0456">Lyase</keyword>
<keyword id="KW-0460">Magnesium</keyword>
<keyword id="KW-0479">Metal-binding</keyword>
<reference key="1">
    <citation type="journal article" date="2009" name="PLoS Genet.">
        <title>Organised genome dynamics in the Escherichia coli species results in highly diverse adaptive paths.</title>
        <authorList>
            <person name="Touchon M."/>
            <person name="Hoede C."/>
            <person name="Tenaillon O."/>
            <person name="Barbe V."/>
            <person name="Baeriswyl S."/>
            <person name="Bidet P."/>
            <person name="Bingen E."/>
            <person name="Bonacorsi S."/>
            <person name="Bouchier C."/>
            <person name="Bouvet O."/>
            <person name="Calteau A."/>
            <person name="Chiapello H."/>
            <person name="Clermont O."/>
            <person name="Cruveiller S."/>
            <person name="Danchin A."/>
            <person name="Diard M."/>
            <person name="Dossat C."/>
            <person name="Karoui M.E."/>
            <person name="Frapy E."/>
            <person name="Garry L."/>
            <person name="Ghigo J.M."/>
            <person name="Gilles A.M."/>
            <person name="Johnson J."/>
            <person name="Le Bouguenec C."/>
            <person name="Lescat M."/>
            <person name="Mangenot S."/>
            <person name="Martinez-Jehanne V."/>
            <person name="Matic I."/>
            <person name="Nassif X."/>
            <person name="Oztas S."/>
            <person name="Petit M.A."/>
            <person name="Pichon C."/>
            <person name="Rouy Z."/>
            <person name="Ruf C.S."/>
            <person name="Schneider D."/>
            <person name="Tourret J."/>
            <person name="Vacherie B."/>
            <person name="Vallenet D."/>
            <person name="Medigue C."/>
            <person name="Rocha E.P.C."/>
            <person name="Denamur E."/>
        </authorList>
    </citation>
    <scope>NUCLEOTIDE SEQUENCE [LARGE SCALE GENOMIC DNA]</scope>
    <source>
        <strain>IAI39 / ExPEC</strain>
    </source>
</reference>
<reference key="2">
    <citation type="journal article" date="2017" name="Green Chem.">
        <title>Expanding the reaction space of aldolases using hydroxypyruvate as a nucleophilic substrate.</title>
        <authorList>
            <person name="de Berardinis V."/>
            <person name="Guerard-Helaine C."/>
            <person name="Darii E."/>
            <person name="Bastard K."/>
            <person name="Helaine V."/>
            <person name="Mariage A."/>
            <person name="Petit J.-L."/>
            <person name="Poupard N."/>
            <person name="Sanchez-Moreno I."/>
            <person name="Stam M."/>
            <person name="Gefflaut T."/>
            <person name="Salanoubat M."/>
            <person name="Lemaire M."/>
        </authorList>
    </citation>
    <scope>FUNCTION</scope>
    <scope>CATALYTIC ACTIVITY</scope>
</reference>
<dbReference type="EC" id="4.1.2.20" evidence="1"/>
<dbReference type="EMBL" id="CU928164">
    <property type="protein sequence ID" value="CAR19741.1"/>
    <property type="molecule type" value="Genomic_DNA"/>
</dbReference>
<dbReference type="RefSeq" id="WP_001058227.1">
    <property type="nucleotide sequence ID" value="NC_011750.1"/>
</dbReference>
<dbReference type="RefSeq" id="YP_002409528.1">
    <property type="nucleotide sequence ID" value="NC_011750.1"/>
</dbReference>
<dbReference type="SMR" id="B7NJZ1"/>
<dbReference type="STRING" id="585057.ECIAI39_3625"/>
<dbReference type="GeneID" id="93778860"/>
<dbReference type="KEGG" id="ect:ECIAI39_3625"/>
<dbReference type="PATRIC" id="fig|585057.6.peg.3756"/>
<dbReference type="HOGENOM" id="CLU_059964_1_0_6"/>
<dbReference type="UniPathway" id="UPA00565">
    <property type="reaction ID" value="UER00630"/>
</dbReference>
<dbReference type="Proteomes" id="UP000000749">
    <property type="component" value="Chromosome"/>
</dbReference>
<dbReference type="GO" id="GO:0005737">
    <property type="term" value="C:cytoplasm"/>
    <property type="evidence" value="ECO:0007669"/>
    <property type="project" value="TreeGrafter"/>
</dbReference>
<dbReference type="GO" id="GO:0061677">
    <property type="term" value="F:2-dehydro-3-deoxy-D-gluconate aldolase activity"/>
    <property type="evidence" value="ECO:0007669"/>
    <property type="project" value="RHEA"/>
</dbReference>
<dbReference type="GO" id="GO:0008672">
    <property type="term" value="F:2-dehydro-3-deoxyglucarate aldolase activity"/>
    <property type="evidence" value="ECO:0007669"/>
    <property type="project" value="UniProtKB-UniRule"/>
</dbReference>
<dbReference type="GO" id="GO:0000287">
    <property type="term" value="F:magnesium ion binding"/>
    <property type="evidence" value="ECO:0007669"/>
    <property type="project" value="UniProtKB-UniRule"/>
</dbReference>
<dbReference type="GO" id="GO:0042838">
    <property type="term" value="P:D-glucarate catabolic process"/>
    <property type="evidence" value="ECO:0007669"/>
    <property type="project" value="UniProtKB-UniRule"/>
</dbReference>
<dbReference type="GO" id="GO:0046392">
    <property type="term" value="P:galactarate catabolic process"/>
    <property type="evidence" value="ECO:0007669"/>
    <property type="project" value="UniProtKB-UniRule"/>
</dbReference>
<dbReference type="FunFam" id="3.20.20.60:FF:000004">
    <property type="entry name" value="5-keto-4-deoxy-D-glucarate aldolase"/>
    <property type="match status" value="1"/>
</dbReference>
<dbReference type="Gene3D" id="3.20.20.60">
    <property type="entry name" value="Phosphoenolpyruvate-binding domains"/>
    <property type="match status" value="1"/>
</dbReference>
<dbReference type="HAMAP" id="MF_01291">
    <property type="entry name" value="KDGluc_aldolase"/>
    <property type="match status" value="1"/>
</dbReference>
<dbReference type="InterPro" id="IPR005000">
    <property type="entry name" value="Aldolase/citrate-lyase_domain"/>
</dbReference>
<dbReference type="InterPro" id="IPR017648">
    <property type="entry name" value="GarL"/>
</dbReference>
<dbReference type="InterPro" id="IPR050251">
    <property type="entry name" value="HpcH-HpaI_aldolase"/>
</dbReference>
<dbReference type="InterPro" id="IPR015813">
    <property type="entry name" value="Pyrv/PenolPyrv_kinase-like_dom"/>
</dbReference>
<dbReference type="InterPro" id="IPR040442">
    <property type="entry name" value="Pyrv_kinase-like_dom_sf"/>
</dbReference>
<dbReference type="NCBIfam" id="TIGR03239">
    <property type="entry name" value="GarL"/>
    <property type="match status" value="1"/>
</dbReference>
<dbReference type="NCBIfam" id="NF007849">
    <property type="entry name" value="PRK10558.1"/>
    <property type="match status" value="1"/>
</dbReference>
<dbReference type="PANTHER" id="PTHR30502">
    <property type="entry name" value="2-KETO-3-DEOXY-L-RHAMNONATE ALDOLASE"/>
    <property type="match status" value="1"/>
</dbReference>
<dbReference type="PANTHER" id="PTHR30502:SF4">
    <property type="entry name" value="5-KETO-4-DEOXY-D-GLUCARATE ALDOLASE"/>
    <property type="match status" value="1"/>
</dbReference>
<dbReference type="Pfam" id="PF03328">
    <property type="entry name" value="HpcH_HpaI"/>
    <property type="match status" value="1"/>
</dbReference>
<dbReference type="SUPFAM" id="SSF51621">
    <property type="entry name" value="Phosphoenolpyruvate/pyruvate domain"/>
    <property type="match status" value="1"/>
</dbReference>
<evidence type="ECO:0000255" key="1">
    <source>
        <dbReference type="HAMAP-Rule" id="MF_01291"/>
    </source>
</evidence>
<evidence type="ECO:0000269" key="2">
    <source ref="2"/>
</evidence>
<organism>
    <name type="scientific">Escherichia coli O7:K1 (strain IAI39 / ExPEC)</name>
    <dbReference type="NCBI Taxonomy" id="585057"/>
    <lineage>
        <taxon>Bacteria</taxon>
        <taxon>Pseudomonadati</taxon>
        <taxon>Pseudomonadota</taxon>
        <taxon>Gammaproteobacteria</taxon>
        <taxon>Enterobacterales</taxon>
        <taxon>Enterobacteriaceae</taxon>
        <taxon>Escherichia</taxon>
    </lineage>
</organism>
<comment type="function">
    <text evidence="1 2">Catalyzes the reversible retro-aldol cleavage of both 5-keto-4-deoxy-D-glucarate and 2-keto-3-deoxy-D-glucarate to pyruvate and tartronic semialdehyde (By similarity). In vitro, can catalyze the aldolisation reaction between hydroxypyruvate (HPA) or pyruvate (PA) and D-glyceraldehyde (D-GA) (Ref.2). The condensation of hydroxypyruvate and D-glyceraldehyde produces 2-dehydro-D-gluconate as the major product and 2-dehydro-D-galactonate (Ref.2). The condensation of pyruvate and D-glyceraldehyde produces 2-dehydro-3-deoxy-L-galactonate as the major product and 2-dehydro-3-deoxy-D-gluconate (Ref.2).</text>
</comment>
<comment type="catalytic activity">
    <reaction evidence="1">
        <text>5-dehydro-4-deoxy-D-glucarate = 2-hydroxy-3-oxopropanoate + pyruvate</text>
        <dbReference type="Rhea" id="RHEA:27726"/>
        <dbReference type="ChEBI" id="CHEBI:15361"/>
        <dbReference type="ChEBI" id="CHEBI:42819"/>
        <dbReference type="ChEBI" id="CHEBI:57978"/>
    </reaction>
</comment>
<comment type="catalytic activity">
    <reaction evidence="1">
        <text>2-dehydro-3-deoxy-D-glucarate = 2-hydroxy-3-oxopropanoate + pyruvate</text>
        <dbReference type="Rhea" id="RHEA:10268"/>
        <dbReference type="ChEBI" id="CHEBI:15361"/>
        <dbReference type="ChEBI" id="CHEBI:57978"/>
        <dbReference type="ChEBI" id="CHEBI:58098"/>
        <dbReference type="EC" id="4.1.2.20"/>
    </reaction>
</comment>
<comment type="catalytic activity">
    <reaction evidence="2">
        <text>D-glyceraldehyde + 3-hydroxypyruvate = 2-dehydro-D-gluconate</text>
        <dbReference type="Rhea" id="RHEA:80043"/>
        <dbReference type="ChEBI" id="CHEBI:16808"/>
        <dbReference type="ChEBI" id="CHEBI:17180"/>
        <dbReference type="ChEBI" id="CHEBI:17378"/>
    </reaction>
</comment>
<comment type="catalytic activity">
    <reaction evidence="2">
        <text>D-glyceraldehyde + 3-hydroxypyruvate = 2-dehydro-D-galactonate</text>
        <dbReference type="Rhea" id="RHEA:80051"/>
        <dbReference type="ChEBI" id="CHEBI:17180"/>
        <dbReference type="ChEBI" id="CHEBI:17378"/>
        <dbReference type="ChEBI" id="CHEBI:28023"/>
    </reaction>
</comment>
<comment type="catalytic activity">
    <reaction evidence="2">
        <text>D-glyceraldehyde + pyruvate = 2-dehydro-3-deoxy-L-galactonate</text>
        <dbReference type="Rhea" id="RHEA:80055"/>
        <dbReference type="ChEBI" id="CHEBI:15361"/>
        <dbReference type="ChEBI" id="CHEBI:17378"/>
        <dbReference type="ChEBI" id="CHEBI:75545"/>
    </reaction>
</comment>
<comment type="catalytic activity">
    <reaction evidence="2">
        <text>2-dehydro-3-deoxy-D-gluconate = D-glyceraldehyde + pyruvate</text>
        <dbReference type="Rhea" id="RHEA:35583"/>
        <dbReference type="ChEBI" id="CHEBI:15361"/>
        <dbReference type="ChEBI" id="CHEBI:17378"/>
        <dbReference type="ChEBI" id="CHEBI:57990"/>
    </reaction>
</comment>
<comment type="cofactor">
    <cofactor evidence="1">
        <name>Mg(2+)</name>
        <dbReference type="ChEBI" id="CHEBI:18420"/>
    </cofactor>
    <text evidence="1">Binds 1 Mg(2+) ion per subunit.</text>
</comment>
<comment type="pathway">
    <text evidence="1">Carbohydrate acid metabolism; galactarate degradation; D-glycerate from galactarate: step 2/3.</text>
</comment>
<comment type="subunit">
    <text evidence="1">Homohexamer; trimer of dimers.</text>
</comment>
<comment type="similarity">
    <text evidence="1">Belongs to the HpcH/HpaI aldolase family. KDGluc aldolase subfamily.</text>
</comment>
<accession>B7NJZ1</accession>
<protein>
    <recommendedName>
        <fullName evidence="1">5-keto-4-deoxy-D-glucarate aldolase</fullName>
        <shortName evidence="1">KDGluc aldolase</shortName>
        <shortName evidence="1">KDGlucA</shortName>
        <ecNumber evidence="1">4.1.2.20</ecNumber>
    </recommendedName>
    <alternativeName>
        <fullName evidence="1">2-dehydro-3-deoxy-D-glucarate aldolase</fullName>
    </alternativeName>
    <alternativeName>
        <fullName evidence="1">2-keto-3-deoxy-D-glucarate aldolase</fullName>
    </alternativeName>
    <alternativeName>
        <fullName evidence="1">5-dehydro-4-deoxy-D-glucarate aldolase</fullName>
    </alternativeName>
    <alternativeName>
        <fullName evidence="1">Alpha-keto-beta-deoxy-D-glucarate aldolase</fullName>
    </alternativeName>
</protein>
<proteinExistence type="evidence at protein level"/>
<feature type="chain" id="PRO_1000140406" description="5-keto-4-deoxy-D-glucarate aldolase">
    <location>
        <begin position="1"/>
        <end position="256"/>
    </location>
</feature>
<feature type="active site" description="Proton acceptor" evidence="1">
    <location>
        <position position="50"/>
    </location>
</feature>
<feature type="binding site" evidence="1">
    <location>
        <position position="151"/>
    </location>
    <ligand>
        <name>substrate</name>
    </ligand>
</feature>
<feature type="binding site" evidence="1">
    <location>
        <position position="153"/>
    </location>
    <ligand>
        <name>Mg(2+)</name>
        <dbReference type="ChEBI" id="CHEBI:18420"/>
    </ligand>
</feature>
<feature type="binding site" evidence="1">
    <location>
        <position position="178"/>
    </location>
    <ligand>
        <name>substrate</name>
    </ligand>
</feature>
<feature type="binding site" evidence="1">
    <location>
        <position position="179"/>
    </location>
    <ligand>
        <name>Mg(2+)</name>
        <dbReference type="ChEBI" id="CHEBI:18420"/>
    </ligand>
</feature>
<feature type="binding site" evidence="1">
    <location>
        <position position="179"/>
    </location>
    <ligand>
        <name>substrate</name>
    </ligand>
</feature>
<feature type="site" description="Transition state stabilizer" evidence="1">
    <location>
        <position position="75"/>
    </location>
</feature>
<feature type="site" description="Increases basicity of active site His" evidence="1">
    <location>
        <position position="89"/>
    </location>
</feature>